<feature type="chain" id="PRO_0000197710" description="Rhodopsin">
    <location>
        <begin position="1"/>
        <end position="351"/>
    </location>
</feature>
<feature type="topological domain" description="Extracellular" evidence="8">
    <location>
        <begin position="1"/>
        <end position="36"/>
    </location>
</feature>
<feature type="transmembrane region" description="Helical; Name=1" evidence="1">
    <location>
        <begin position="37"/>
        <end position="61"/>
    </location>
</feature>
<feature type="topological domain" description="Cytoplasmic" evidence="8">
    <location>
        <begin position="62"/>
        <end position="73"/>
    </location>
</feature>
<feature type="transmembrane region" description="Helical; Name=2" evidence="1">
    <location>
        <begin position="74"/>
        <end position="96"/>
    </location>
</feature>
<feature type="topological domain" description="Extracellular" evidence="8">
    <location>
        <begin position="97"/>
        <end position="110"/>
    </location>
</feature>
<feature type="transmembrane region" description="Helical; Name=3" evidence="1">
    <location>
        <begin position="111"/>
        <end position="133"/>
    </location>
</feature>
<feature type="topological domain" description="Cytoplasmic" evidence="8">
    <location>
        <begin position="134"/>
        <end position="152"/>
    </location>
</feature>
<feature type="transmembrane region" description="Helical; Name=4" evidence="1">
    <location>
        <begin position="153"/>
        <end position="173"/>
    </location>
</feature>
<feature type="topological domain" description="Extracellular" evidence="8">
    <location>
        <begin position="174"/>
        <end position="202"/>
    </location>
</feature>
<feature type="transmembrane region" description="Helical; Name=5" evidence="1">
    <location>
        <begin position="203"/>
        <end position="224"/>
    </location>
</feature>
<feature type="topological domain" description="Cytoplasmic" evidence="8">
    <location>
        <begin position="225"/>
        <end position="252"/>
    </location>
</feature>
<feature type="transmembrane region" description="Helical; Name=6" evidence="1">
    <location>
        <begin position="253"/>
        <end position="274"/>
    </location>
</feature>
<feature type="topological domain" description="Extracellular" evidence="8">
    <location>
        <begin position="275"/>
        <end position="286"/>
    </location>
</feature>
<feature type="transmembrane region" description="Helical; Name=7" evidence="1">
    <location>
        <begin position="287"/>
        <end position="308"/>
    </location>
</feature>
<feature type="topological domain" description="Cytoplasmic" evidence="8">
    <location>
        <begin position="309"/>
        <end position="351"/>
    </location>
</feature>
<feature type="region of interest" description="Disordered" evidence="7">
    <location>
        <begin position="330"/>
        <end position="351"/>
    </location>
</feature>
<feature type="short sequence motif" description="'Ionic lock' involved in activated form stabilization" evidence="1">
    <location>
        <begin position="134"/>
        <end position="136"/>
    </location>
</feature>
<feature type="compositionally biased region" description="Low complexity" evidence="7">
    <location>
        <begin position="335"/>
        <end position="351"/>
    </location>
</feature>
<feature type="site" description="Plays an important role in the conformation switch to the active conformation" evidence="1">
    <location>
        <position position="113"/>
    </location>
</feature>
<feature type="modified residue" description="N6-(retinylidene)lysine" evidence="1">
    <location>
        <position position="296"/>
    </location>
</feature>
<feature type="lipid moiety-binding region" description="S-palmitoyl cysteine" evidence="1">
    <location>
        <position position="323"/>
    </location>
</feature>
<feature type="glycosylation site" description="N-linked (GlcNAc...) asparagine" evidence="5">
    <location>
        <position position="2"/>
    </location>
</feature>
<feature type="glycosylation site" description="N-linked (GlcNAc...) asparagine" evidence="5">
    <location>
        <position position="15"/>
    </location>
</feature>
<feature type="glycosylation site" description="N-linked (GlcNAc...) asparagine" evidence="5">
    <location>
        <position position="200"/>
    </location>
</feature>
<feature type="disulfide bond" evidence="6">
    <location>
        <begin position="110"/>
        <end position="187"/>
    </location>
</feature>
<dbReference type="EMBL" id="U57537">
    <property type="protein sequence ID" value="AAB39526.1"/>
    <property type="molecule type" value="mRNA"/>
</dbReference>
<dbReference type="SMR" id="P79898"/>
<dbReference type="GlyCosmos" id="P79898">
    <property type="glycosylation" value="3 sites, No reported glycans"/>
</dbReference>
<dbReference type="GO" id="GO:0016020">
    <property type="term" value="C:membrane"/>
    <property type="evidence" value="ECO:0000250"/>
    <property type="project" value="UniProtKB"/>
</dbReference>
<dbReference type="GO" id="GO:0097381">
    <property type="term" value="C:photoreceptor disc membrane"/>
    <property type="evidence" value="ECO:0000250"/>
    <property type="project" value="UniProtKB"/>
</dbReference>
<dbReference type="GO" id="GO:0005886">
    <property type="term" value="C:plasma membrane"/>
    <property type="evidence" value="ECO:0000250"/>
    <property type="project" value="UniProtKB"/>
</dbReference>
<dbReference type="GO" id="GO:0005502">
    <property type="term" value="F:11-cis retinal binding"/>
    <property type="evidence" value="ECO:0000250"/>
    <property type="project" value="UniProtKB"/>
</dbReference>
<dbReference type="GO" id="GO:0008020">
    <property type="term" value="F:G protein-coupled photoreceptor activity"/>
    <property type="evidence" value="ECO:0000250"/>
    <property type="project" value="UniProtKB"/>
</dbReference>
<dbReference type="GO" id="GO:0016038">
    <property type="term" value="P:absorption of visible light"/>
    <property type="evidence" value="ECO:0000250"/>
    <property type="project" value="UniProtKB"/>
</dbReference>
<dbReference type="GO" id="GO:0016056">
    <property type="term" value="P:G protein-coupled opsin signaling pathway"/>
    <property type="evidence" value="ECO:0000250"/>
    <property type="project" value="UniProtKB"/>
</dbReference>
<dbReference type="GO" id="GO:0007601">
    <property type="term" value="P:visual perception"/>
    <property type="evidence" value="ECO:0007669"/>
    <property type="project" value="UniProtKB-KW"/>
</dbReference>
<dbReference type="CDD" id="cd15080">
    <property type="entry name" value="7tmA_MWS_opsin"/>
    <property type="match status" value="1"/>
</dbReference>
<dbReference type="FunFam" id="1.20.1070.10:FF:000018">
    <property type="entry name" value="Rhodopsin"/>
    <property type="match status" value="1"/>
</dbReference>
<dbReference type="Gene3D" id="1.20.1070.10">
    <property type="entry name" value="Rhodopsin 7-helix transmembrane proteins"/>
    <property type="match status" value="1"/>
</dbReference>
<dbReference type="InterPro" id="IPR050125">
    <property type="entry name" value="GPCR_opsins"/>
</dbReference>
<dbReference type="InterPro" id="IPR000276">
    <property type="entry name" value="GPCR_Rhodpsn"/>
</dbReference>
<dbReference type="InterPro" id="IPR017452">
    <property type="entry name" value="GPCR_Rhodpsn_7TM"/>
</dbReference>
<dbReference type="InterPro" id="IPR001760">
    <property type="entry name" value="Opsin"/>
</dbReference>
<dbReference type="InterPro" id="IPR027430">
    <property type="entry name" value="Retinal_BS"/>
</dbReference>
<dbReference type="InterPro" id="IPR000732">
    <property type="entry name" value="Rhodopsin"/>
</dbReference>
<dbReference type="InterPro" id="IPR019477">
    <property type="entry name" value="Rhodopsin_N"/>
</dbReference>
<dbReference type="PANTHER" id="PTHR24240">
    <property type="entry name" value="OPSIN"/>
    <property type="match status" value="1"/>
</dbReference>
<dbReference type="Pfam" id="PF00001">
    <property type="entry name" value="7tm_1"/>
    <property type="match status" value="1"/>
</dbReference>
<dbReference type="Pfam" id="PF10413">
    <property type="entry name" value="Rhodopsin_N"/>
    <property type="match status" value="1"/>
</dbReference>
<dbReference type="PRINTS" id="PR00237">
    <property type="entry name" value="GPCRRHODOPSN"/>
</dbReference>
<dbReference type="PRINTS" id="PR00238">
    <property type="entry name" value="OPSIN"/>
</dbReference>
<dbReference type="PRINTS" id="PR00579">
    <property type="entry name" value="RHODOPSIN"/>
</dbReference>
<dbReference type="SUPFAM" id="SSF81321">
    <property type="entry name" value="Family A G protein-coupled receptor-like"/>
    <property type="match status" value="1"/>
</dbReference>
<dbReference type="PROSITE" id="PS00237">
    <property type="entry name" value="G_PROTEIN_RECEP_F1_1"/>
    <property type="match status" value="1"/>
</dbReference>
<dbReference type="PROSITE" id="PS50262">
    <property type="entry name" value="G_PROTEIN_RECEP_F1_2"/>
    <property type="match status" value="1"/>
</dbReference>
<dbReference type="PROSITE" id="PS00238">
    <property type="entry name" value="OPSIN"/>
    <property type="match status" value="1"/>
</dbReference>
<accession>P79898</accession>
<keyword id="KW-0966">Cell projection</keyword>
<keyword id="KW-0157">Chromophore</keyword>
<keyword id="KW-1015">Disulfide bond</keyword>
<keyword id="KW-0297">G-protein coupled receptor</keyword>
<keyword id="KW-0325">Glycoprotein</keyword>
<keyword id="KW-0449">Lipoprotein</keyword>
<keyword id="KW-0472">Membrane</keyword>
<keyword id="KW-0564">Palmitate</keyword>
<keyword id="KW-0597">Phosphoprotein</keyword>
<keyword id="KW-0600">Photoreceptor protein</keyword>
<keyword id="KW-0675">Receptor</keyword>
<keyword id="KW-0681">Retinal protein</keyword>
<keyword id="KW-0716">Sensory transduction</keyword>
<keyword id="KW-0807">Transducer</keyword>
<keyword id="KW-0812">Transmembrane</keyword>
<keyword id="KW-1133">Transmembrane helix</keyword>
<keyword id="KW-0844">Vision</keyword>
<protein>
    <recommendedName>
        <fullName>Rhodopsin</fullName>
    </recommendedName>
</protein>
<proteinExistence type="evidence at transcript level"/>
<evidence type="ECO:0000250" key="1">
    <source>
        <dbReference type="UniProtKB" id="P02699"/>
    </source>
</evidence>
<evidence type="ECO:0000250" key="2">
    <source>
        <dbReference type="UniProtKB" id="P08100"/>
    </source>
</evidence>
<evidence type="ECO:0000250" key="3">
    <source>
        <dbReference type="UniProtKB" id="P32309"/>
    </source>
</evidence>
<evidence type="ECO:0000250" key="4">
    <source>
        <dbReference type="UniProtKB" id="P35359"/>
    </source>
</evidence>
<evidence type="ECO:0000255" key="5"/>
<evidence type="ECO:0000255" key="6">
    <source>
        <dbReference type="PROSITE-ProRule" id="PRU00521"/>
    </source>
</evidence>
<evidence type="ECO:0000256" key="7">
    <source>
        <dbReference type="SAM" id="MobiDB-lite"/>
    </source>
</evidence>
<evidence type="ECO:0000305" key="8"/>
<organism>
    <name type="scientific">Sargocentron diadema</name>
    <name type="common">Crown squirrelfish</name>
    <name type="synonym">Adioryx diadema</name>
    <dbReference type="NCBI Taxonomy" id="47709"/>
    <lineage>
        <taxon>Eukaryota</taxon>
        <taxon>Metazoa</taxon>
        <taxon>Chordata</taxon>
        <taxon>Craniata</taxon>
        <taxon>Vertebrata</taxon>
        <taxon>Euteleostomi</taxon>
        <taxon>Actinopterygii</taxon>
        <taxon>Neopterygii</taxon>
        <taxon>Teleostei</taxon>
        <taxon>Neoteleostei</taxon>
        <taxon>Acanthomorphata</taxon>
        <taxon>Holocentriformes</taxon>
        <taxon>Holocentridae</taxon>
        <taxon>Sargocentron</taxon>
    </lineage>
</organism>
<gene>
    <name type="primary">rho</name>
</gene>
<sequence>MNGTEGPFFYIPMVNTTGIVRSPYEYPQYYLVNPAAYAILGAYMFFLIIVGFPVNFMTLYVTLEHKKLRTPLNYILLNLAVADLFMVIGGFTTTMYTSMHGYFVLGRLGCNLEGFFATLGGMISLWSLAVLAIERWVVVCKPISNFRFGENHAIMGVSLTWGMALACTVPPLVGWSRYIPEGMQCSCGIDYYTRAEGFNNESFVLYMFFCHFTIPLTIIFFCYGRLLCAVKEAAAAQQESETTQRAEREVTRMVIIMVIGFLVCWLPYASVAWFIFTHQGSEFGPLFMTIPAFFAKSSSIYNPMIYICMNKQFRHCMITTLFCGKNPFEGEEEGASSTKTEASSASSVSPA</sequence>
<name>OPSD_SARDI</name>
<comment type="function">
    <text evidence="1 2 3">Photoreceptor required for image-forming vision at low light intensity. While most salt water fish species use retinal as chromophore, most freshwater fish use 3-dehydroretinal, or a mixture of retinal and 3-dehydroretinal (By similarity). Light-induced isomerization of 11-cis to all-trans retinal triggers a conformational change that activates signaling via G-proteins. Subsequent receptor phosphorylation mediates displacement of the bound G-protein alpha subunit by arrestin and terminates signaling (By similarity).</text>
</comment>
<comment type="subcellular location">
    <subcellularLocation>
        <location evidence="2">Membrane</location>
        <topology evidence="2">Multi-pass membrane protein</topology>
    </subcellularLocation>
    <subcellularLocation>
        <location evidence="4">Cell projection</location>
        <location evidence="4">Cilium</location>
        <location evidence="4">Photoreceptor outer segment</location>
    </subcellularLocation>
    <text evidence="2">Synthesized in the inner segment (IS) of rod photoreceptor cells before vectorial transport to disk membranes in the rod outer segment (OS) photosensory cilia.</text>
</comment>
<comment type="PTM">
    <text evidence="1">Phosphorylated on some or all of the serine and threonine residues present in the C-terminal region.</text>
</comment>
<comment type="PTM">
    <text evidence="1">Contains one covalently linked retinal chromophore.</text>
</comment>
<comment type="similarity">
    <text evidence="6">Belongs to the G-protein coupled receptor 1 family. Opsin subfamily.</text>
</comment>
<reference key="1">
    <citation type="submission" date="1997-01" db="EMBL/GenBank/DDBJ databases">
        <title>Molecular phylogeny of 11 holocentrid fishes (Order Beryciformes) inferred from rhodopsin cDNA and cytochrome b.</title>
        <authorList>
            <person name="Toller W.W."/>
            <person name="Moses K."/>
            <person name="McFall-Ngai M.J."/>
        </authorList>
    </citation>
    <scope>NUCLEOTIDE SEQUENCE [MRNA]</scope>
    <source>
        <tissue>Eye</tissue>
    </source>
</reference>